<dbReference type="EC" id="6.3.2.8" evidence="1"/>
<dbReference type="EMBL" id="AM260525">
    <property type="protein sequence ID" value="CAK01929.1"/>
    <property type="molecule type" value="Genomic_DNA"/>
</dbReference>
<dbReference type="RefSeq" id="WP_012232055.1">
    <property type="nucleotide sequence ID" value="NC_010161.1"/>
</dbReference>
<dbReference type="SMR" id="A9IWA4"/>
<dbReference type="KEGG" id="btr:BT_1590"/>
<dbReference type="eggNOG" id="COG0773">
    <property type="taxonomic scope" value="Bacteria"/>
</dbReference>
<dbReference type="HOGENOM" id="CLU_028104_2_2_5"/>
<dbReference type="UniPathway" id="UPA00219"/>
<dbReference type="Proteomes" id="UP000001592">
    <property type="component" value="Chromosome"/>
</dbReference>
<dbReference type="GO" id="GO:0005737">
    <property type="term" value="C:cytoplasm"/>
    <property type="evidence" value="ECO:0007669"/>
    <property type="project" value="UniProtKB-SubCell"/>
</dbReference>
<dbReference type="GO" id="GO:0005524">
    <property type="term" value="F:ATP binding"/>
    <property type="evidence" value="ECO:0007669"/>
    <property type="project" value="UniProtKB-UniRule"/>
</dbReference>
<dbReference type="GO" id="GO:0008763">
    <property type="term" value="F:UDP-N-acetylmuramate-L-alanine ligase activity"/>
    <property type="evidence" value="ECO:0007669"/>
    <property type="project" value="UniProtKB-UniRule"/>
</dbReference>
<dbReference type="GO" id="GO:0051301">
    <property type="term" value="P:cell division"/>
    <property type="evidence" value="ECO:0007669"/>
    <property type="project" value="UniProtKB-KW"/>
</dbReference>
<dbReference type="GO" id="GO:0071555">
    <property type="term" value="P:cell wall organization"/>
    <property type="evidence" value="ECO:0007669"/>
    <property type="project" value="UniProtKB-KW"/>
</dbReference>
<dbReference type="GO" id="GO:0009252">
    <property type="term" value="P:peptidoglycan biosynthetic process"/>
    <property type="evidence" value="ECO:0007669"/>
    <property type="project" value="UniProtKB-UniRule"/>
</dbReference>
<dbReference type="GO" id="GO:0008360">
    <property type="term" value="P:regulation of cell shape"/>
    <property type="evidence" value="ECO:0007669"/>
    <property type="project" value="UniProtKB-KW"/>
</dbReference>
<dbReference type="Gene3D" id="3.90.190.20">
    <property type="entry name" value="Mur ligase, C-terminal domain"/>
    <property type="match status" value="1"/>
</dbReference>
<dbReference type="Gene3D" id="3.40.1190.10">
    <property type="entry name" value="Mur-like, catalytic domain"/>
    <property type="match status" value="1"/>
</dbReference>
<dbReference type="Gene3D" id="3.40.50.720">
    <property type="entry name" value="NAD(P)-binding Rossmann-like Domain"/>
    <property type="match status" value="1"/>
</dbReference>
<dbReference type="HAMAP" id="MF_00046">
    <property type="entry name" value="MurC"/>
    <property type="match status" value="1"/>
</dbReference>
<dbReference type="InterPro" id="IPR036565">
    <property type="entry name" value="Mur-like_cat_sf"/>
</dbReference>
<dbReference type="InterPro" id="IPR004101">
    <property type="entry name" value="Mur_ligase_C"/>
</dbReference>
<dbReference type="InterPro" id="IPR036615">
    <property type="entry name" value="Mur_ligase_C_dom_sf"/>
</dbReference>
<dbReference type="InterPro" id="IPR013221">
    <property type="entry name" value="Mur_ligase_cen"/>
</dbReference>
<dbReference type="InterPro" id="IPR000713">
    <property type="entry name" value="Mur_ligase_N"/>
</dbReference>
<dbReference type="InterPro" id="IPR050061">
    <property type="entry name" value="MurCDEF_pg_biosynth"/>
</dbReference>
<dbReference type="InterPro" id="IPR005758">
    <property type="entry name" value="UDP-N-AcMur_Ala_ligase_MurC"/>
</dbReference>
<dbReference type="NCBIfam" id="TIGR01082">
    <property type="entry name" value="murC"/>
    <property type="match status" value="1"/>
</dbReference>
<dbReference type="PANTHER" id="PTHR43445:SF3">
    <property type="entry name" value="UDP-N-ACETYLMURAMATE--L-ALANINE LIGASE"/>
    <property type="match status" value="1"/>
</dbReference>
<dbReference type="PANTHER" id="PTHR43445">
    <property type="entry name" value="UDP-N-ACETYLMURAMATE--L-ALANINE LIGASE-RELATED"/>
    <property type="match status" value="1"/>
</dbReference>
<dbReference type="Pfam" id="PF01225">
    <property type="entry name" value="Mur_ligase"/>
    <property type="match status" value="1"/>
</dbReference>
<dbReference type="Pfam" id="PF02875">
    <property type="entry name" value="Mur_ligase_C"/>
    <property type="match status" value="1"/>
</dbReference>
<dbReference type="Pfam" id="PF08245">
    <property type="entry name" value="Mur_ligase_M"/>
    <property type="match status" value="1"/>
</dbReference>
<dbReference type="SUPFAM" id="SSF51984">
    <property type="entry name" value="MurCD N-terminal domain"/>
    <property type="match status" value="1"/>
</dbReference>
<dbReference type="SUPFAM" id="SSF53623">
    <property type="entry name" value="MurD-like peptide ligases, catalytic domain"/>
    <property type="match status" value="1"/>
</dbReference>
<dbReference type="SUPFAM" id="SSF53244">
    <property type="entry name" value="MurD-like peptide ligases, peptide-binding domain"/>
    <property type="match status" value="1"/>
</dbReference>
<evidence type="ECO:0000255" key="1">
    <source>
        <dbReference type="HAMAP-Rule" id="MF_00046"/>
    </source>
</evidence>
<organism>
    <name type="scientific">Bartonella tribocorum (strain CIP 105476 / IBS 506)</name>
    <dbReference type="NCBI Taxonomy" id="382640"/>
    <lineage>
        <taxon>Bacteria</taxon>
        <taxon>Pseudomonadati</taxon>
        <taxon>Pseudomonadota</taxon>
        <taxon>Alphaproteobacteria</taxon>
        <taxon>Hyphomicrobiales</taxon>
        <taxon>Bartonellaceae</taxon>
        <taxon>Bartonella</taxon>
    </lineage>
</organism>
<feature type="chain" id="PRO_0000336815" description="UDP-N-acetylmuramate--L-alanine ligase">
    <location>
        <begin position="1"/>
        <end position="475"/>
    </location>
</feature>
<feature type="binding site" evidence="1">
    <location>
        <begin position="114"/>
        <end position="120"/>
    </location>
    <ligand>
        <name>ATP</name>
        <dbReference type="ChEBI" id="CHEBI:30616"/>
    </ligand>
</feature>
<comment type="function">
    <text evidence="1">Cell wall formation.</text>
</comment>
<comment type="catalytic activity">
    <reaction evidence="1">
        <text>UDP-N-acetyl-alpha-D-muramate + L-alanine + ATP = UDP-N-acetyl-alpha-D-muramoyl-L-alanine + ADP + phosphate + H(+)</text>
        <dbReference type="Rhea" id="RHEA:23372"/>
        <dbReference type="ChEBI" id="CHEBI:15378"/>
        <dbReference type="ChEBI" id="CHEBI:30616"/>
        <dbReference type="ChEBI" id="CHEBI:43474"/>
        <dbReference type="ChEBI" id="CHEBI:57972"/>
        <dbReference type="ChEBI" id="CHEBI:70757"/>
        <dbReference type="ChEBI" id="CHEBI:83898"/>
        <dbReference type="ChEBI" id="CHEBI:456216"/>
        <dbReference type="EC" id="6.3.2.8"/>
    </reaction>
</comment>
<comment type="pathway">
    <text evidence="1">Cell wall biogenesis; peptidoglycan biosynthesis.</text>
</comment>
<comment type="subcellular location">
    <subcellularLocation>
        <location evidence="1">Cytoplasm</location>
    </subcellularLocation>
</comment>
<comment type="similarity">
    <text evidence="1">Belongs to the MurCDEF family.</text>
</comment>
<accession>A9IWA4</accession>
<gene>
    <name evidence="1" type="primary">murC</name>
    <name type="ordered locus">BT_1590</name>
</gene>
<sequence>MKMPLDIGVIHFIGIGGIGMSGIAEVFYNLGYKVQGSDQVESANVERLRRKGINVHIGHYAENLGNAEVVVFSTAVKKTNPEYIAAKERHLPLVRRAEMLAELMRFRRAIAVGGTHGKTTTTSMVAALLDAGHFDPVVINGGIINAYGTNSRTGEGDWMIVEADESDGTFLKLPADIAVVTNIDAEHLDHYGSFDAVRTAFRQFVENVPFYGFAVLCVDHPEVQSLAGRIDDRWVITYGANPQADVRFLNLSRDGQKTHFDVLVRSRKTGRKIELKNLLLPMAGQHNVANATAAIAIAHELGISNELIKKGLAEFGGVKRRFTRTGSWRGIEIFDDYGHHPVEIKAVLRAARESAKGRVIAIAQPHRYSRLYHLFDDFAACFNDADTVLITPVYAAGEEPIVGFGSQELVEHIKMAGHRDVRLIHDLEDVVSLVSKFAQAEDYVVFLGAGNITQWACALPHRLSGLDGYDKFSAH</sequence>
<reference key="1">
    <citation type="journal article" date="2007" name="Nat. Genet.">
        <title>Genomic analysis of Bartonella identifies type IV secretion systems as host adaptability factors.</title>
        <authorList>
            <person name="Saenz H.L."/>
            <person name="Engel P."/>
            <person name="Stoeckli M.C."/>
            <person name="Lanz C."/>
            <person name="Raddatz G."/>
            <person name="Vayssier-Taussat M."/>
            <person name="Birtles R."/>
            <person name="Schuster S.C."/>
            <person name="Dehio C."/>
        </authorList>
    </citation>
    <scope>NUCLEOTIDE SEQUENCE [LARGE SCALE GENOMIC DNA]</scope>
    <source>
        <strain>CIP 105476 / IBS 506</strain>
    </source>
</reference>
<keyword id="KW-0067">ATP-binding</keyword>
<keyword id="KW-0131">Cell cycle</keyword>
<keyword id="KW-0132">Cell division</keyword>
<keyword id="KW-0133">Cell shape</keyword>
<keyword id="KW-0961">Cell wall biogenesis/degradation</keyword>
<keyword id="KW-0963">Cytoplasm</keyword>
<keyword id="KW-0436">Ligase</keyword>
<keyword id="KW-0547">Nucleotide-binding</keyword>
<keyword id="KW-0573">Peptidoglycan synthesis</keyword>
<protein>
    <recommendedName>
        <fullName evidence="1">UDP-N-acetylmuramate--L-alanine ligase</fullName>
        <ecNumber evidence="1">6.3.2.8</ecNumber>
    </recommendedName>
    <alternativeName>
        <fullName evidence="1">UDP-N-acetylmuramoyl-L-alanine synthetase</fullName>
    </alternativeName>
</protein>
<name>MURC_BART1</name>
<proteinExistence type="inferred from homology"/>